<proteinExistence type="evidence at transcript level"/>
<sequence length="430" mass="49119">MGQPEGLERFDSPGKGRGLKATRSFALGELLFTCPAYTYVLTDTERGNHCDFCFARKEGLSKCGKCKQAFYCNVDCQKGDWPMHKLECSAMCSYGQNWCPSETVRLTARILAKQKTQTERTPSETFLSVKEFESHLSKLDNEKKELIESDIAALHRFYSKNLHYTDNAALVFLFAQVNCNGFTIEDEELSHLGSAIFPDVALMNHSCCPNIIVTFKGTVAEIRAVQEIHAGDEVFTSYIDLLYPTEDRNDRLMDSYFFTCDCRECSTKQKDPAKLEIRKLSDPPSHQTVKDMIKYARNIVEEFRRAKHYKTPSELLEMCELSLDKMGSVFVDSNVYMLHMMYQAMGVCLYLQEWDGALKYGEKIIKPYSKHYPAYSLNVASMWLKLGRLYMGLEKTTIGTKALKKALAIMQIAHGPDHHYIAEIKKELEL</sequence>
<comment type="function">
    <text evidence="2">Protein-lysine N-methyltransferase that methylates both histones and non-histone proteins, including p53/TP53 and RB1. Specifically trimethylates histone H3 'Lys-4' (H3K4me3) in vivo. The activity requires interaction with HSP90alpha. Shows even higher methyltransferase activity on p53/TP53. Monomethylates 'Lys-370' of p53/TP53, leading to decreased DNA-binding activity and subsequent transcriptional regulation activity of p53/TP53. Monomethylates RB1 at 'Lys-860'.</text>
</comment>
<comment type="catalytic activity">
    <reaction evidence="2">
        <text>L-lysyl(4)-[histone H3] + 3 S-adenosyl-L-methionine = N(6),N(6),N(6)-trimethyl-L-lysyl(4)-[histone H3] + 3 S-adenosyl-L-homocysteine + 3 H(+)</text>
        <dbReference type="Rhea" id="RHEA:60260"/>
        <dbReference type="Rhea" id="RHEA-COMP:15537"/>
        <dbReference type="Rhea" id="RHEA-COMP:15547"/>
        <dbReference type="ChEBI" id="CHEBI:15378"/>
        <dbReference type="ChEBI" id="CHEBI:29969"/>
        <dbReference type="ChEBI" id="CHEBI:57856"/>
        <dbReference type="ChEBI" id="CHEBI:59789"/>
        <dbReference type="ChEBI" id="CHEBI:61961"/>
        <dbReference type="EC" id="2.1.1.354"/>
    </reaction>
</comment>
<comment type="catalytic activity">
    <reaction evidence="2">
        <text>L-lysyl-[protein] + S-adenosyl-L-methionine = N(6)-methyl-L-lysyl-[protein] + S-adenosyl-L-homocysteine + H(+)</text>
        <dbReference type="Rhea" id="RHEA:51736"/>
        <dbReference type="Rhea" id="RHEA-COMP:9752"/>
        <dbReference type="Rhea" id="RHEA-COMP:13053"/>
        <dbReference type="ChEBI" id="CHEBI:15378"/>
        <dbReference type="ChEBI" id="CHEBI:29969"/>
        <dbReference type="ChEBI" id="CHEBI:57856"/>
        <dbReference type="ChEBI" id="CHEBI:59789"/>
        <dbReference type="ChEBI" id="CHEBI:61929"/>
    </reaction>
</comment>
<comment type="subcellular location">
    <subcellularLocation>
        <location evidence="1">Cytoplasm</location>
        <location evidence="1">Cytosol</location>
    </subcellularLocation>
    <subcellularLocation>
        <location evidence="1">Nucleus</location>
    </subcellularLocation>
</comment>
<comment type="developmental stage">
    <text evidence="5">Expressed from stage 2, indicating it is expressed maternally. Expression is persistent through stage 40.</text>
</comment>
<comment type="similarity">
    <text evidence="4">Belongs to the class V-like SAM-binding methyltransferase superfamily.</text>
</comment>
<reference key="1">
    <citation type="submission" date="2003-01" db="EMBL/GenBank/DDBJ databases">
        <authorList>
            <consortium name="NIH - Xenopus Gene Collection (XGC) project"/>
        </authorList>
    </citation>
    <scope>NUCLEOTIDE SEQUENCE [LARGE SCALE MRNA]</scope>
    <source>
        <tissue>Embryo</tissue>
    </source>
</reference>
<reference key="2">
    <citation type="journal article" date="2008" name="Cytotechnology">
        <title>smyd1 and smyd2 are expressed in muscle tissue in Xenopus laevis.</title>
        <authorList>
            <person name="Kawamura S."/>
            <person name="Yoshigai E."/>
            <person name="Kuhara S."/>
            <person name="Tashiro K."/>
        </authorList>
    </citation>
    <scope>DEVELOPMENTAL STAGE</scope>
</reference>
<feature type="chain" id="PRO_0000405850" description="N-lysine methyltransferase SMYD2-A">
    <location>
        <begin position="1"/>
        <end position="430"/>
    </location>
</feature>
<feature type="domain" description="SET" evidence="4">
    <location>
        <begin position="5"/>
        <end position="239"/>
    </location>
</feature>
<feature type="zinc finger region" description="MYND-type" evidence="3">
    <location>
        <begin position="50"/>
        <end position="88"/>
    </location>
</feature>
<feature type="binding site" evidence="1">
    <location>
        <begin position="15"/>
        <end position="17"/>
    </location>
    <ligand>
        <name>S-adenosyl-L-methionine</name>
        <dbReference type="ChEBI" id="CHEBI:59789"/>
    </ligand>
</feature>
<feature type="binding site" evidence="3">
    <location>
        <position position="50"/>
    </location>
    <ligand>
        <name>Zn(2+)</name>
        <dbReference type="ChEBI" id="CHEBI:29105"/>
        <label>1</label>
    </ligand>
</feature>
<feature type="binding site" evidence="3">
    <location>
        <position position="53"/>
    </location>
    <ligand>
        <name>Zn(2+)</name>
        <dbReference type="ChEBI" id="CHEBI:29105"/>
        <label>1</label>
    </ligand>
</feature>
<feature type="binding site" evidence="3">
    <location>
        <position position="63"/>
    </location>
    <ligand>
        <name>Zn(2+)</name>
        <dbReference type="ChEBI" id="CHEBI:29105"/>
        <label>2</label>
    </ligand>
</feature>
<feature type="binding site" evidence="3">
    <location>
        <position position="66"/>
    </location>
    <ligand>
        <name>Zn(2+)</name>
        <dbReference type="ChEBI" id="CHEBI:29105"/>
        <label>2</label>
    </ligand>
</feature>
<feature type="binding site" evidence="3">
    <location>
        <position position="72"/>
    </location>
    <ligand>
        <name>Zn(2+)</name>
        <dbReference type="ChEBI" id="CHEBI:29105"/>
        <label>1</label>
    </ligand>
</feature>
<feature type="binding site" evidence="3">
    <location>
        <position position="76"/>
    </location>
    <ligand>
        <name>Zn(2+)</name>
        <dbReference type="ChEBI" id="CHEBI:29105"/>
        <label>1</label>
    </ligand>
</feature>
<feature type="binding site" evidence="3">
    <location>
        <position position="84"/>
    </location>
    <ligand>
        <name>Zn(2+)</name>
        <dbReference type="ChEBI" id="CHEBI:29105"/>
        <label>2</label>
    </ligand>
</feature>
<feature type="binding site" evidence="3">
    <location>
        <position position="88"/>
    </location>
    <ligand>
        <name>Zn(2+)</name>
        <dbReference type="ChEBI" id="CHEBI:29105"/>
        <label>2</label>
    </ligand>
</feature>
<feature type="binding site" evidence="4">
    <location>
        <position position="135"/>
    </location>
    <ligand>
        <name>S-adenosyl-L-methionine</name>
        <dbReference type="ChEBI" id="CHEBI:59789"/>
    </ligand>
</feature>
<feature type="binding site" evidence="1">
    <location>
        <begin position="204"/>
        <end position="205"/>
    </location>
    <ligand>
        <name>S-adenosyl-L-methionine</name>
        <dbReference type="ChEBI" id="CHEBI:59789"/>
    </ligand>
</feature>
<feature type="binding site" evidence="1">
    <location>
        <begin position="256"/>
        <end position="258"/>
    </location>
    <ligand>
        <name>S-adenosyl-L-methionine</name>
        <dbReference type="ChEBI" id="CHEBI:59789"/>
    </ligand>
</feature>
<organism>
    <name type="scientific">Xenopus laevis</name>
    <name type="common">African clawed frog</name>
    <dbReference type="NCBI Taxonomy" id="8355"/>
    <lineage>
        <taxon>Eukaryota</taxon>
        <taxon>Metazoa</taxon>
        <taxon>Chordata</taxon>
        <taxon>Craniata</taxon>
        <taxon>Vertebrata</taxon>
        <taxon>Euteleostomi</taxon>
        <taxon>Amphibia</taxon>
        <taxon>Batrachia</taxon>
        <taxon>Anura</taxon>
        <taxon>Pipoidea</taxon>
        <taxon>Pipidae</taxon>
        <taxon>Xenopodinae</taxon>
        <taxon>Xenopus</taxon>
        <taxon>Xenopus</taxon>
    </lineage>
</organism>
<protein>
    <recommendedName>
        <fullName>N-lysine methyltransferase SMYD2-A</fullName>
        <ecNumber evidence="2">2.1.1.-</ecNumber>
    </recommendedName>
    <alternativeName>
        <fullName>Histone methyltransferase SMYD2-A</fullName>
        <ecNumber evidence="2">2.1.1.354</ecNumber>
    </alternativeName>
    <alternativeName>
        <fullName>SET and MYND domain-containing protein 2A</fullName>
    </alternativeName>
</protein>
<gene>
    <name type="primary">smyd2-a</name>
    <name type="synonym">smyd2</name>
</gene>
<evidence type="ECO:0000250" key="1"/>
<evidence type="ECO:0000250" key="2">
    <source>
        <dbReference type="UniProtKB" id="Q9NRG4"/>
    </source>
</evidence>
<evidence type="ECO:0000255" key="3">
    <source>
        <dbReference type="PROSITE-ProRule" id="PRU00134"/>
    </source>
</evidence>
<evidence type="ECO:0000255" key="4">
    <source>
        <dbReference type="PROSITE-ProRule" id="PRU00190"/>
    </source>
</evidence>
<evidence type="ECO:0000269" key="5">
    <source>
    </source>
</evidence>
<name>SMY2A_XENLA</name>
<accession>Q7ZXV5</accession>
<keyword id="KW-0156">Chromatin regulator</keyword>
<keyword id="KW-0963">Cytoplasm</keyword>
<keyword id="KW-0479">Metal-binding</keyword>
<keyword id="KW-0489">Methyltransferase</keyword>
<keyword id="KW-0539">Nucleus</keyword>
<keyword id="KW-1185">Reference proteome</keyword>
<keyword id="KW-0949">S-adenosyl-L-methionine</keyword>
<keyword id="KW-0804">Transcription</keyword>
<keyword id="KW-0805">Transcription regulation</keyword>
<keyword id="KW-0808">Transferase</keyword>
<keyword id="KW-0862">Zinc</keyword>
<keyword id="KW-0863">Zinc-finger</keyword>
<dbReference type="EC" id="2.1.1.-" evidence="2"/>
<dbReference type="EC" id="2.1.1.354" evidence="2"/>
<dbReference type="EMBL" id="BC044103">
    <property type="protein sequence ID" value="AAH44103.1"/>
    <property type="molecule type" value="mRNA"/>
</dbReference>
<dbReference type="RefSeq" id="NP_001080251.1">
    <property type="nucleotide sequence ID" value="NM_001086782.1"/>
</dbReference>
<dbReference type="SMR" id="Q7ZXV5"/>
<dbReference type="DNASU" id="379943"/>
<dbReference type="GeneID" id="379943"/>
<dbReference type="KEGG" id="xla:379943"/>
<dbReference type="AGR" id="Xenbase:XB-GENE-985586"/>
<dbReference type="CTD" id="379943"/>
<dbReference type="Xenbase" id="XB-GENE-985586">
    <property type="gene designation" value="smyd2.L"/>
</dbReference>
<dbReference type="OrthoDB" id="5945798at2759"/>
<dbReference type="Proteomes" id="UP000186698">
    <property type="component" value="Chromosome 5L"/>
</dbReference>
<dbReference type="Bgee" id="379943">
    <property type="expression patterns" value="Expressed in heart and 19 other cell types or tissues"/>
</dbReference>
<dbReference type="GO" id="GO:0005737">
    <property type="term" value="C:cytoplasm"/>
    <property type="evidence" value="ECO:0000250"/>
    <property type="project" value="UniProtKB"/>
</dbReference>
<dbReference type="GO" id="GO:0005829">
    <property type="term" value="C:cytosol"/>
    <property type="evidence" value="ECO:0000250"/>
    <property type="project" value="UniProtKB"/>
</dbReference>
<dbReference type="GO" id="GO:0005634">
    <property type="term" value="C:nucleus"/>
    <property type="evidence" value="ECO:0000250"/>
    <property type="project" value="UniProtKB"/>
</dbReference>
<dbReference type="GO" id="GO:0046975">
    <property type="term" value="F:histone H3K36 methyltransferase activity"/>
    <property type="evidence" value="ECO:0000250"/>
    <property type="project" value="UniProtKB"/>
</dbReference>
<dbReference type="GO" id="GO:0140999">
    <property type="term" value="F:histone H3K4 trimethyltransferase activity"/>
    <property type="evidence" value="ECO:0007669"/>
    <property type="project" value="UniProtKB-EC"/>
</dbReference>
<dbReference type="GO" id="GO:0016279">
    <property type="term" value="F:protein-lysine N-methyltransferase activity"/>
    <property type="evidence" value="ECO:0000250"/>
    <property type="project" value="UniProtKB"/>
</dbReference>
<dbReference type="GO" id="GO:0000993">
    <property type="term" value="F:RNA polymerase II complex binding"/>
    <property type="evidence" value="ECO:0000250"/>
    <property type="project" value="UniProtKB"/>
</dbReference>
<dbReference type="GO" id="GO:0008270">
    <property type="term" value="F:zinc ion binding"/>
    <property type="evidence" value="ECO:0007669"/>
    <property type="project" value="UniProtKB-KW"/>
</dbReference>
<dbReference type="GO" id="GO:0008285">
    <property type="term" value="P:negative regulation of cell population proliferation"/>
    <property type="evidence" value="ECO:0000250"/>
    <property type="project" value="UniProtKB"/>
</dbReference>
<dbReference type="GO" id="GO:0000122">
    <property type="term" value="P:negative regulation of transcription by RNA polymerase II"/>
    <property type="evidence" value="ECO:0000250"/>
    <property type="project" value="UniProtKB"/>
</dbReference>
<dbReference type="GO" id="GO:0018027">
    <property type="term" value="P:peptidyl-lysine dimethylation"/>
    <property type="evidence" value="ECO:0000250"/>
    <property type="project" value="UniProtKB"/>
</dbReference>
<dbReference type="GO" id="GO:0018026">
    <property type="term" value="P:peptidyl-lysine monomethylation"/>
    <property type="evidence" value="ECO:0000250"/>
    <property type="project" value="UniProtKB"/>
</dbReference>
<dbReference type="GO" id="GO:0043516">
    <property type="term" value="P:regulation of DNA damage response, signal transduction by p53 class mediator"/>
    <property type="evidence" value="ECO:0000250"/>
    <property type="project" value="UniProtKB"/>
</dbReference>
<dbReference type="CDD" id="cd19202">
    <property type="entry name" value="SET_SMYD2"/>
    <property type="match status" value="1"/>
</dbReference>
<dbReference type="FunFam" id="2.170.270.10:FF:000013">
    <property type="entry name" value="Histone-lysine N-methyltransferase SMYD1 isoform 1"/>
    <property type="match status" value="1"/>
</dbReference>
<dbReference type="FunFam" id="1.25.40.10:FF:000298">
    <property type="entry name" value="N-lysine methyltransferase SMYD2"/>
    <property type="match status" value="1"/>
</dbReference>
<dbReference type="FunFam" id="1.10.220.160:FF:000001">
    <property type="entry name" value="N-lysine methyltransferase SMYD2 isoform X1"/>
    <property type="match status" value="1"/>
</dbReference>
<dbReference type="FunFam" id="1.25.40.970:FF:000002">
    <property type="entry name" value="N-lysine methyltransferase SMYD2 isoform X1"/>
    <property type="match status" value="1"/>
</dbReference>
<dbReference type="FunFam" id="6.10.140.2220:FF:000013">
    <property type="entry name" value="N-lysine methyltransferase SMYD2 isoform X1"/>
    <property type="match status" value="1"/>
</dbReference>
<dbReference type="Gene3D" id="1.10.220.160">
    <property type="match status" value="1"/>
</dbReference>
<dbReference type="Gene3D" id="1.25.40.970">
    <property type="match status" value="1"/>
</dbReference>
<dbReference type="Gene3D" id="6.10.140.2220">
    <property type="match status" value="1"/>
</dbReference>
<dbReference type="Gene3D" id="2.170.270.10">
    <property type="entry name" value="SET domain"/>
    <property type="match status" value="1"/>
</dbReference>
<dbReference type="Gene3D" id="1.25.40.10">
    <property type="entry name" value="Tetratricopeptide repeat domain"/>
    <property type="match status" value="1"/>
</dbReference>
<dbReference type="InterPro" id="IPR050869">
    <property type="entry name" value="H3K4_H4K5_MeTrfase"/>
</dbReference>
<dbReference type="InterPro" id="IPR001214">
    <property type="entry name" value="SET_dom"/>
</dbReference>
<dbReference type="InterPro" id="IPR046341">
    <property type="entry name" value="SET_dom_sf"/>
</dbReference>
<dbReference type="InterPro" id="IPR044419">
    <property type="entry name" value="SMYD2_SET"/>
</dbReference>
<dbReference type="InterPro" id="IPR011990">
    <property type="entry name" value="TPR-like_helical_dom_sf"/>
</dbReference>
<dbReference type="InterPro" id="IPR002893">
    <property type="entry name" value="Znf_MYND"/>
</dbReference>
<dbReference type="PANTHER" id="PTHR12197">
    <property type="entry name" value="HISTONE-LYSINE N-METHYLTRANSFERASE SMYD"/>
    <property type="match status" value="1"/>
</dbReference>
<dbReference type="PANTHER" id="PTHR12197:SF193">
    <property type="entry name" value="N-LYSINE METHYLTRANSFERASE SMYD2"/>
    <property type="match status" value="1"/>
</dbReference>
<dbReference type="Pfam" id="PF00856">
    <property type="entry name" value="SET"/>
    <property type="match status" value="1"/>
</dbReference>
<dbReference type="Pfam" id="PF01753">
    <property type="entry name" value="zf-MYND"/>
    <property type="match status" value="1"/>
</dbReference>
<dbReference type="SMART" id="SM00317">
    <property type="entry name" value="SET"/>
    <property type="match status" value="1"/>
</dbReference>
<dbReference type="SUPFAM" id="SSF82199">
    <property type="entry name" value="SET domain"/>
    <property type="match status" value="1"/>
</dbReference>
<dbReference type="SUPFAM" id="SSF48452">
    <property type="entry name" value="TPR-like"/>
    <property type="match status" value="1"/>
</dbReference>
<dbReference type="PROSITE" id="PS50280">
    <property type="entry name" value="SET"/>
    <property type="match status" value="1"/>
</dbReference>
<dbReference type="PROSITE" id="PS01360">
    <property type="entry name" value="ZF_MYND_1"/>
    <property type="match status" value="1"/>
</dbReference>
<dbReference type="PROSITE" id="PS50865">
    <property type="entry name" value="ZF_MYND_2"/>
    <property type="match status" value="1"/>
</dbReference>